<sequence length="124" mass="15327">MVRLFRNPIKCIFYRRSRKIQEKKLRKSLKKLNFYHPPEDCCQIYRLLENVPGGTYFITENMTNDLIMVVKDSVDKKIKSIKLYLHGSYIKIHQHYYINIYMYLMRYTQIYKYPLICFNKYYNI</sequence>
<comment type="function">
    <text evidence="1">Plays a role in virus cell tropism, and may be required for efficient virus replication in macrophages.</text>
</comment>
<comment type="similarity">
    <text evidence="2">Belongs to the asfivirus MGF 100 family.</text>
</comment>
<gene>
    <name type="ordered locus">Pret-020</name>
</gene>
<name>1001R_ASFP4</name>
<proteinExistence type="inferred from homology"/>
<organismHost>
    <name type="scientific">Ornithodoros</name>
    <name type="common">relapsing fever ticks</name>
    <dbReference type="NCBI Taxonomy" id="6937"/>
</organismHost>
<organismHost>
    <name type="scientific">Phacochoerus aethiopicus</name>
    <name type="common">Warthog</name>
    <dbReference type="NCBI Taxonomy" id="85517"/>
</organismHost>
<organismHost>
    <name type="scientific">Phacochoerus africanus</name>
    <name type="common">Warthog</name>
    <dbReference type="NCBI Taxonomy" id="41426"/>
</organismHost>
<organismHost>
    <name type="scientific">Potamochoerus larvatus</name>
    <name type="common">Bushpig</name>
    <dbReference type="NCBI Taxonomy" id="273792"/>
</organismHost>
<organismHost>
    <name type="scientific">Sus scrofa</name>
    <name type="common">Pig</name>
    <dbReference type="NCBI Taxonomy" id="9823"/>
</organismHost>
<accession>P0C9F2</accession>
<feature type="chain" id="PRO_0000373172" description="Protein MGF 100-1R">
    <location>
        <begin position="1"/>
        <end position="124"/>
    </location>
</feature>
<organism>
    <name type="scientific">African swine fever virus (isolate Tick/South Africa/Pretoriuskop Pr4/1996)</name>
    <name type="common">ASFV</name>
    <dbReference type="NCBI Taxonomy" id="561443"/>
    <lineage>
        <taxon>Viruses</taxon>
        <taxon>Varidnaviria</taxon>
        <taxon>Bamfordvirae</taxon>
        <taxon>Nucleocytoviricota</taxon>
        <taxon>Pokkesviricetes</taxon>
        <taxon>Asfuvirales</taxon>
        <taxon>Asfarviridae</taxon>
        <taxon>Asfivirus</taxon>
        <taxon>African swine fever virus</taxon>
    </lineage>
</organism>
<reference key="1">
    <citation type="submission" date="2003-03" db="EMBL/GenBank/DDBJ databases">
        <title>African swine fever virus genomes.</title>
        <authorList>
            <person name="Kutish G.F."/>
            <person name="Rock D.L."/>
        </authorList>
    </citation>
    <scope>NUCLEOTIDE SEQUENCE [LARGE SCALE GENOMIC DNA]</scope>
</reference>
<evidence type="ECO:0000250" key="1"/>
<evidence type="ECO:0000305" key="2"/>
<protein>
    <recommendedName>
        <fullName>Protein MGF 100-1R</fullName>
    </recommendedName>
</protein>
<dbReference type="EMBL" id="AY261363">
    <property type="status" value="NOT_ANNOTATED_CDS"/>
    <property type="molecule type" value="Genomic_DNA"/>
</dbReference>
<dbReference type="SMR" id="P0C9F2"/>
<dbReference type="Proteomes" id="UP000000859">
    <property type="component" value="Segment"/>
</dbReference>